<geneLocation type="plasmid">
    <name>pMCHL01</name>
</geneLocation>
<sequence length="306" mass="32417">MIAQVIDGRAEAARLTDNVRARAHRFTDEFGRCPGLAVVLIGDDPASSVYVKAKTEKARSTGILSSSHRLPSDTTEDALLRLIDQLNRDRTVDGILVQLPLPPHIAPERVLQRILPCKDVDGFHPVNAGLLATGQPGLVPCTPLGCLRLVQSVAAELVGQNVVVVGRSTIVGRPAAQVFLNADCSVTILHKESRDVPGHCRSADILVVAAGSPGLVRRDWVKPGAVVIDVGINRIPVSSGYRLVGDVDFEGVQYVASAITPVPGGVGPMTVAALMENTVACAEALAIRAPEVMSPDNRLHFDHADV</sequence>
<evidence type="ECO:0000255" key="1">
    <source>
        <dbReference type="HAMAP-Rule" id="MF_01576"/>
    </source>
</evidence>
<protein>
    <recommendedName>
        <fullName evidence="1">Bifunctional protein FolD</fullName>
    </recommendedName>
    <domain>
        <recommendedName>
            <fullName evidence="1">Methylenetetrahydrofolate dehydrogenase</fullName>
            <ecNumber evidence="1">1.5.1.5</ecNumber>
        </recommendedName>
    </domain>
    <domain>
        <recommendedName>
            <fullName evidence="1">Methenyltetrahydrofolate cyclohydrolase</fullName>
            <ecNumber evidence="1">3.5.4.9</ecNumber>
        </recommendedName>
    </domain>
</protein>
<keyword id="KW-0028">Amino-acid biosynthesis</keyword>
<keyword id="KW-0368">Histidine biosynthesis</keyword>
<keyword id="KW-0378">Hydrolase</keyword>
<keyword id="KW-0486">Methionine biosynthesis</keyword>
<keyword id="KW-0511">Multifunctional enzyme</keyword>
<keyword id="KW-0521">NADP</keyword>
<keyword id="KW-0554">One-carbon metabolism</keyword>
<keyword id="KW-0560">Oxidoreductase</keyword>
<keyword id="KW-0614">Plasmid</keyword>
<keyword id="KW-0658">Purine biosynthesis</keyword>
<comment type="function">
    <text evidence="1">Catalyzes the oxidation of 5,10-methylenetetrahydrofolate to 5,10-methenyltetrahydrofolate and then the hydrolysis of 5,10-methenyltetrahydrofolate to 10-formyltetrahydrofolate.</text>
</comment>
<comment type="catalytic activity">
    <reaction evidence="1">
        <text>(6R)-5,10-methylene-5,6,7,8-tetrahydrofolate + NADP(+) = (6R)-5,10-methenyltetrahydrofolate + NADPH</text>
        <dbReference type="Rhea" id="RHEA:22812"/>
        <dbReference type="ChEBI" id="CHEBI:15636"/>
        <dbReference type="ChEBI" id="CHEBI:57455"/>
        <dbReference type="ChEBI" id="CHEBI:57783"/>
        <dbReference type="ChEBI" id="CHEBI:58349"/>
        <dbReference type="EC" id="1.5.1.5"/>
    </reaction>
</comment>
<comment type="catalytic activity">
    <reaction evidence="1">
        <text>(6R)-5,10-methenyltetrahydrofolate + H2O = (6R)-10-formyltetrahydrofolate + H(+)</text>
        <dbReference type="Rhea" id="RHEA:23700"/>
        <dbReference type="ChEBI" id="CHEBI:15377"/>
        <dbReference type="ChEBI" id="CHEBI:15378"/>
        <dbReference type="ChEBI" id="CHEBI:57455"/>
        <dbReference type="ChEBI" id="CHEBI:195366"/>
        <dbReference type="EC" id="3.5.4.9"/>
    </reaction>
</comment>
<comment type="pathway">
    <text evidence="1">One-carbon metabolism; tetrahydrofolate interconversion.</text>
</comment>
<comment type="subunit">
    <text evidence="1">Homodimer.</text>
</comment>
<comment type="similarity">
    <text evidence="1">Belongs to the tetrahydrofolate dehydrogenase/cyclohydrolase family.</text>
</comment>
<name>FOLD_METC4</name>
<reference key="1">
    <citation type="journal article" date="1999" name="Proc. Natl. Acad. Sci. U.S.A.">
        <title>A corrinoid-dependent catabolic pathway for growth of a Methylobacterium strain with chloromethane.</title>
        <authorList>
            <person name="Vannelli T."/>
            <person name="Messmer M."/>
            <person name="Studer A."/>
            <person name="Vuilleumier S."/>
            <person name="Leisinger T."/>
        </authorList>
    </citation>
    <scope>NUCLEOTIDE SEQUENCE [GENOMIC DNA]</scope>
</reference>
<reference key="2">
    <citation type="submission" date="2008-12" db="EMBL/GenBank/DDBJ databases">
        <title>Complete sequence of plasmid1 of Methylobacterium chloromethanicum CM4.</title>
        <authorList>
            <consortium name="US DOE Joint Genome Institute"/>
            <person name="Lucas S."/>
            <person name="Copeland A."/>
            <person name="Lapidus A."/>
            <person name="Glavina del Rio T."/>
            <person name="Dalin E."/>
            <person name="Tice H."/>
            <person name="Bruce D."/>
            <person name="Goodwin L."/>
            <person name="Pitluck S."/>
            <person name="Chertkov O."/>
            <person name="Brettin T."/>
            <person name="Detter J.C."/>
            <person name="Han C."/>
            <person name="Larimer F."/>
            <person name="Land M."/>
            <person name="Hauser L."/>
            <person name="Kyrpides N."/>
            <person name="Mikhailova N."/>
            <person name="Marx C."/>
            <person name="Richardson P."/>
        </authorList>
    </citation>
    <scope>NUCLEOTIDE SEQUENCE [LARGE SCALE GENOMIC DNA]</scope>
    <source>
        <strain>CM4 / NCIMB 13688</strain>
    </source>
</reference>
<organism>
    <name type="scientific">Methylorubrum extorquens (strain CM4 / NCIMB 13688)</name>
    <name type="common">Methylobacterium extorquens</name>
    <dbReference type="NCBI Taxonomy" id="440085"/>
    <lineage>
        <taxon>Bacteria</taxon>
        <taxon>Pseudomonadati</taxon>
        <taxon>Pseudomonadota</taxon>
        <taxon>Alphaproteobacteria</taxon>
        <taxon>Hyphomicrobiales</taxon>
        <taxon>Methylobacteriaceae</taxon>
        <taxon>Methylorubrum</taxon>
    </lineage>
</organism>
<proteinExistence type="inferred from homology"/>
<accession>Q9X7F6</accession>
<accession>B7L3L0</accession>
<gene>
    <name evidence="1" type="primary">folD</name>
    <name type="ordered locus">Mchl_5700</name>
</gene>
<feature type="chain" id="PRO_0000268397" description="Bifunctional protein FolD">
    <location>
        <begin position="1"/>
        <end position="306"/>
    </location>
</feature>
<feature type="binding site" evidence="1">
    <location>
        <begin position="166"/>
        <end position="168"/>
    </location>
    <ligand>
        <name>NADP(+)</name>
        <dbReference type="ChEBI" id="CHEBI:58349"/>
    </ligand>
</feature>
<feature type="binding site" evidence="1">
    <location>
        <position position="232"/>
    </location>
    <ligand>
        <name>NADP(+)</name>
        <dbReference type="ChEBI" id="CHEBI:58349"/>
    </ligand>
</feature>
<dbReference type="EC" id="1.5.1.5" evidence="1"/>
<dbReference type="EC" id="3.5.4.9" evidence="1"/>
<dbReference type="EMBL" id="AJ011316">
    <property type="protein sequence ID" value="CAB39400.1"/>
    <property type="molecule type" value="Genomic_DNA"/>
</dbReference>
<dbReference type="EMBL" id="CP001299">
    <property type="protein sequence ID" value="ACK86418.1"/>
    <property type="molecule type" value="Genomic_DNA"/>
</dbReference>
<dbReference type="PIR" id="T51705">
    <property type="entry name" value="T51705"/>
</dbReference>
<dbReference type="RefSeq" id="WP_012606308.1">
    <property type="nucleotide sequence ID" value="NC_011758.1"/>
</dbReference>
<dbReference type="SMR" id="Q9X7F6"/>
<dbReference type="KEGG" id="mch:Mchl_5700"/>
<dbReference type="HOGENOM" id="CLU_034045_2_1_5"/>
<dbReference type="UniPathway" id="UPA00193"/>
<dbReference type="Proteomes" id="UP000002385">
    <property type="component" value="Plasmid pCMU01"/>
</dbReference>
<dbReference type="GO" id="GO:0005829">
    <property type="term" value="C:cytosol"/>
    <property type="evidence" value="ECO:0007669"/>
    <property type="project" value="TreeGrafter"/>
</dbReference>
<dbReference type="GO" id="GO:0004477">
    <property type="term" value="F:methenyltetrahydrofolate cyclohydrolase activity"/>
    <property type="evidence" value="ECO:0007669"/>
    <property type="project" value="UniProtKB-UniRule"/>
</dbReference>
<dbReference type="GO" id="GO:0004488">
    <property type="term" value="F:methylenetetrahydrofolate dehydrogenase (NADP+) activity"/>
    <property type="evidence" value="ECO:0007669"/>
    <property type="project" value="UniProtKB-UniRule"/>
</dbReference>
<dbReference type="GO" id="GO:0000105">
    <property type="term" value="P:L-histidine biosynthetic process"/>
    <property type="evidence" value="ECO:0007669"/>
    <property type="project" value="UniProtKB-KW"/>
</dbReference>
<dbReference type="GO" id="GO:0009086">
    <property type="term" value="P:methionine biosynthetic process"/>
    <property type="evidence" value="ECO:0007669"/>
    <property type="project" value="UniProtKB-KW"/>
</dbReference>
<dbReference type="GO" id="GO:0006164">
    <property type="term" value="P:purine nucleotide biosynthetic process"/>
    <property type="evidence" value="ECO:0007669"/>
    <property type="project" value="UniProtKB-KW"/>
</dbReference>
<dbReference type="GO" id="GO:0035999">
    <property type="term" value="P:tetrahydrofolate interconversion"/>
    <property type="evidence" value="ECO:0007669"/>
    <property type="project" value="UniProtKB-UniRule"/>
</dbReference>
<dbReference type="CDD" id="cd01080">
    <property type="entry name" value="NAD_bind_m-THF_DH_Cyclohyd"/>
    <property type="match status" value="1"/>
</dbReference>
<dbReference type="FunFam" id="3.40.50.720:FF:000006">
    <property type="entry name" value="Bifunctional protein FolD"/>
    <property type="match status" value="1"/>
</dbReference>
<dbReference type="FunFam" id="3.40.50.10860:FF:000005">
    <property type="entry name" value="C-1-tetrahydrofolate synthase, cytoplasmic, putative"/>
    <property type="match status" value="1"/>
</dbReference>
<dbReference type="Gene3D" id="3.40.50.10860">
    <property type="entry name" value="Leucine Dehydrogenase, chain A, domain 1"/>
    <property type="match status" value="1"/>
</dbReference>
<dbReference type="Gene3D" id="3.40.50.720">
    <property type="entry name" value="NAD(P)-binding Rossmann-like Domain"/>
    <property type="match status" value="1"/>
</dbReference>
<dbReference type="HAMAP" id="MF_01576">
    <property type="entry name" value="THF_DHG_CYH"/>
    <property type="match status" value="1"/>
</dbReference>
<dbReference type="InterPro" id="IPR046346">
    <property type="entry name" value="Aminoacid_DH-like_N_sf"/>
</dbReference>
<dbReference type="InterPro" id="IPR036291">
    <property type="entry name" value="NAD(P)-bd_dom_sf"/>
</dbReference>
<dbReference type="InterPro" id="IPR000672">
    <property type="entry name" value="THF_DH/CycHdrlase"/>
</dbReference>
<dbReference type="InterPro" id="IPR020630">
    <property type="entry name" value="THF_DH/CycHdrlase_cat_dom"/>
</dbReference>
<dbReference type="InterPro" id="IPR020867">
    <property type="entry name" value="THF_DH/CycHdrlase_CS"/>
</dbReference>
<dbReference type="InterPro" id="IPR020631">
    <property type="entry name" value="THF_DH/CycHdrlase_NAD-bd_dom"/>
</dbReference>
<dbReference type="PANTHER" id="PTHR48099:SF5">
    <property type="entry name" value="C-1-TETRAHYDROFOLATE SYNTHASE, CYTOPLASMIC"/>
    <property type="match status" value="1"/>
</dbReference>
<dbReference type="PANTHER" id="PTHR48099">
    <property type="entry name" value="C-1-TETRAHYDROFOLATE SYNTHASE, CYTOPLASMIC-RELATED"/>
    <property type="match status" value="1"/>
</dbReference>
<dbReference type="Pfam" id="PF00763">
    <property type="entry name" value="THF_DHG_CYH"/>
    <property type="match status" value="1"/>
</dbReference>
<dbReference type="Pfam" id="PF02882">
    <property type="entry name" value="THF_DHG_CYH_C"/>
    <property type="match status" value="1"/>
</dbReference>
<dbReference type="PRINTS" id="PR00085">
    <property type="entry name" value="THFDHDRGNASE"/>
</dbReference>
<dbReference type="SUPFAM" id="SSF53223">
    <property type="entry name" value="Aminoacid dehydrogenase-like, N-terminal domain"/>
    <property type="match status" value="1"/>
</dbReference>
<dbReference type="SUPFAM" id="SSF51735">
    <property type="entry name" value="NAD(P)-binding Rossmann-fold domains"/>
    <property type="match status" value="1"/>
</dbReference>
<dbReference type="PROSITE" id="PS00767">
    <property type="entry name" value="THF_DHG_CYH_2"/>
    <property type="match status" value="1"/>
</dbReference>